<accession>A1RX33</accession>
<comment type="function">
    <text evidence="1">Responsible for synthesis of pseudouridine from uracil-54 and uracil-55 in the psi GC loop of transfer RNAs.</text>
</comment>
<comment type="catalytic activity">
    <reaction evidence="1">
        <text>uridine(54) in tRNA = pseudouridine(54) in tRNA</text>
        <dbReference type="Rhea" id="RHEA:57876"/>
        <dbReference type="Rhea" id="RHEA-COMP:10193"/>
        <dbReference type="Rhea" id="RHEA-COMP:14141"/>
        <dbReference type="ChEBI" id="CHEBI:65314"/>
        <dbReference type="ChEBI" id="CHEBI:65315"/>
    </reaction>
</comment>
<comment type="catalytic activity">
    <reaction evidence="1">
        <text>uridine(55) in tRNA = pseudouridine(55) in tRNA</text>
        <dbReference type="Rhea" id="RHEA:42532"/>
        <dbReference type="Rhea" id="RHEA-COMP:10101"/>
        <dbReference type="Rhea" id="RHEA-COMP:10102"/>
        <dbReference type="ChEBI" id="CHEBI:65314"/>
        <dbReference type="ChEBI" id="CHEBI:65315"/>
        <dbReference type="EC" id="5.4.99.25"/>
    </reaction>
</comment>
<comment type="similarity">
    <text evidence="1">Belongs to the pseudouridine synthase Pus10 family.</text>
</comment>
<keyword id="KW-0413">Isomerase</keyword>
<keyword id="KW-1185">Reference proteome</keyword>
<keyword id="KW-0694">RNA-binding</keyword>
<keyword id="KW-0819">tRNA processing</keyword>
<sequence length="444" mass="50205">MSTGTSASYKRDNAFYALDKVERILLDGYSLCDACTGRLFGLRGYGLSNTERGRALKTLLIMKAFQASPRQADLELLRVLARTGFEPARELLKKLSGEDVEVKACSICEGLTGRYYELALRAVEEAKSYEFNTFEVGVRIDAEVIRREEELWRRYGLESAESIRNEASREVGKIISKLTGKEYSRNNSELLIIVDLSAGAIELHPAPVFVYGRYRKYARGLPQNPWPQPDERIKFNTSIEELIVKPALELFEAEKAKFHAAGREDIDVRTLGTGRPFVLEIKKPRKRNIDLKVLAEKINSGAGGLIEVLDLAYTDRKTIKKLKSLASIAKKAYVARVKFEKPVDDEKLAEISKVFSNAVINQRTPTRVLHRRVDKLRKKIVYRLEARKISQDEVEFYLETQGGFYVKEFIHGDNGRTTPSIAEFLGNNVLSIELDVVSIEETAA</sequence>
<name>PUS10_THEPD</name>
<gene>
    <name evidence="1" type="primary">pus10</name>
    <name type="ordered locus">Tpen_0354</name>
</gene>
<dbReference type="EC" id="5.4.99.25" evidence="1"/>
<dbReference type="EMBL" id="CP000505">
    <property type="protein sequence ID" value="ABL77763.1"/>
    <property type="molecule type" value="Genomic_DNA"/>
</dbReference>
<dbReference type="RefSeq" id="WP_011752028.1">
    <property type="nucleotide sequence ID" value="NC_008698.1"/>
</dbReference>
<dbReference type="SMR" id="A1RX33"/>
<dbReference type="STRING" id="368408.Tpen_0354"/>
<dbReference type="EnsemblBacteria" id="ABL77763">
    <property type="protein sequence ID" value="ABL77763"/>
    <property type="gene ID" value="Tpen_0354"/>
</dbReference>
<dbReference type="GeneID" id="4600892"/>
<dbReference type="KEGG" id="tpe:Tpen_0354"/>
<dbReference type="eggNOG" id="arCOG01015">
    <property type="taxonomic scope" value="Archaea"/>
</dbReference>
<dbReference type="HOGENOM" id="CLU_028780_2_0_2"/>
<dbReference type="OrthoDB" id="10348at2157"/>
<dbReference type="Proteomes" id="UP000000641">
    <property type="component" value="Chromosome"/>
</dbReference>
<dbReference type="GO" id="GO:0000049">
    <property type="term" value="F:tRNA binding"/>
    <property type="evidence" value="ECO:0007669"/>
    <property type="project" value="InterPro"/>
</dbReference>
<dbReference type="GO" id="GO:0160148">
    <property type="term" value="F:tRNA pseudouridine(55) synthase activity"/>
    <property type="evidence" value="ECO:0007669"/>
    <property type="project" value="UniProtKB-EC"/>
</dbReference>
<dbReference type="GO" id="GO:0031119">
    <property type="term" value="P:tRNA pseudouridine synthesis"/>
    <property type="evidence" value="ECO:0007669"/>
    <property type="project" value="UniProtKB-UniRule"/>
</dbReference>
<dbReference type="FunFam" id="3.30.70.2510:FF:000001">
    <property type="entry name" value="tRNA pseudouridine synthase Pus10"/>
    <property type="match status" value="1"/>
</dbReference>
<dbReference type="FunFam" id="3.30.70.3190:FF:000001">
    <property type="entry name" value="tRNA pseudouridine synthase Pus10"/>
    <property type="match status" value="1"/>
</dbReference>
<dbReference type="Gene3D" id="3.30.70.2510">
    <property type="match status" value="1"/>
</dbReference>
<dbReference type="Gene3D" id="3.30.70.3190">
    <property type="match status" value="1"/>
</dbReference>
<dbReference type="HAMAP" id="MF_01893">
    <property type="entry name" value="Pus10_arch"/>
    <property type="match status" value="1"/>
</dbReference>
<dbReference type="InterPro" id="IPR020103">
    <property type="entry name" value="PsdUridine_synth_cat_dom_sf"/>
</dbReference>
<dbReference type="InterPro" id="IPR005912">
    <property type="entry name" value="Pus10"/>
</dbReference>
<dbReference type="InterPro" id="IPR039894">
    <property type="entry name" value="Pus10-like"/>
</dbReference>
<dbReference type="InterPro" id="IPR048741">
    <property type="entry name" value="Pus10-like_C"/>
</dbReference>
<dbReference type="InterPro" id="IPR055174">
    <property type="entry name" value="Pus10_THUMP_arc"/>
</dbReference>
<dbReference type="NCBIfam" id="TIGR01213">
    <property type="entry name" value="pseudo_Pus10arc"/>
    <property type="match status" value="1"/>
</dbReference>
<dbReference type="PANTHER" id="PTHR21568">
    <property type="entry name" value="TRNA PSEUDOURIDINE SYNTHASE PUS10"/>
    <property type="match status" value="1"/>
</dbReference>
<dbReference type="PANTHER" id="PTHR21568:SF0">
    <property type="entry name" value="TRNA PSEUDOURIDINE SYNTHASE PUS10"/>
    <property type="match status" value="1"/>
</dbReference>
<dbReference type="Pfam" id="PF21238">
    <property type="entry name" value="Pus10_C"/>
    <property type="match status" value="1"/>
</dbReference>
<dbReference type="Pfam" id="PF22023">
    <property type="entry name" value="Pus10_THUMP_arc"/>
    <property type="match status" value="1"/>
</dbReference>
<dbReference type="SUPFAM" id="SSF55120">
    <property type="entry name" value="Pseudouridine synthase"/>
    <property type="match status" value="1"/>
</dbReference>
<reference key="1">
    <citation type="journal article" date="2008" name="J. Bacteriol.">
        <title>Genome sequence of Thermofilum pendens reveals an exceptional loss of biosynthetic pathways without genome reduction.</title>
        <authorList>
            <person name="Anderson I."/>
            <person name="Rodriguez J."/>
            <person name="Susanti D."/>
            <person name="Porat I."/>
            <person name="Reich C."/>
            <person name="Ulrich L.E."/>
            <person name="Elkins J.G."/>
            <person name="Mavromatis K."/>
            <person name="Lykidis A."/>
            <person name="Kim E."/>
            <person name="Thompson L.S."/>
            <person name="Nolan M."/>
            <person name="Land M."/>
            <person name="Copeland A."/>
            <person name="Lapidus A."/>
            <person name="Lucas S."/>
            <person name="Detter C."/>
            <person name="Zhulin I.B."/>
            <person name="Olsen G.J."/>
            <person name="Whitman W."/>
            <person name="Mukhopadhyay B."/>
            <person name="Bristow J."/>
            <person name="Kyrpides N."/>
        </authorList>
    </citation>
    <scope>NUCLEOTIDE SEQUENCE [LARGE SCALE GENOMIC DNA]</scope>
    <source>
        <strain>DSM 2475 / Hrk 5</strain>
    </source>
</reference>
<evidence type="ECO:0000255" key="1">
    <source>
        <dbReference type="HAMAP-Rule" id="MF_01893"/>
    </source>
</evidence>
<organism>
    <name type="scientific">Thermofilum pendens (strain DSM 2475 / Hrk 5)</name>
    <dbReference type="NCBI Taxonomy" id="368408"/>
    <lineage>
        <taxon>Archaea</taxon>
        <taxon>Thermoproteota</taxon>
        <taxon>Thermoprotei</taxon>
        <taxon>Thermofilales</taxon>
        <taxon>Thermofilaceae</taxon>
        <taxon>Thermofilum</taxon>
    </lineage>
</organism>
<feature type="chain" id="PRO_0000407397" description="tRNA pseudouridine synthase Pus10">
    <location>
        <begin position="1"/>
        <end position="444"/>
    </location>
</feature>
<feature type="active site" description="Nucleophile" evidence="1">
    <location>
        <position position="265"/>
    </location>
</feature>
<feature type="binding site" evidence="1">
    <location>
        <position position="333"/>
    </location>
    <ligand>
        <name>substrate</name>
    </ligand>
</feature>
<feature type="binding site" evidence="1">
    <location>
        <position position="405"/>
    </location>
    <ligand>
        <name>substrate</name>
    </ligand>
</feature>
<proteinExistence type="inferred from homology"/>
<protein>
    <recommendedName>
        <fullName evidence="1">tRNA pseudouridine synthase Pus10</fullName>
        <ecNumber evidence="1">5.4.99.25</ecNumber>
    </recommendedName>
    <alternativeName>
        <fullName evidence="1">tRNA pseudouridine 54/55 synthase</fullName>
        <shortName evidence="1">Psi54/55 synthase</shortName>
    </alternativeName>
</protein>